<proteinExistence type="evidence at transcript level"/>
<sequence length="446" mass="50204">MREILHIQGGQCGNQIGAKFWEVVCDEHGIDPTGRYTGNSDLQLERVNVYYNEASCGRFVPRAVLMDLEPGTMDSVRTGPYGQIFRPDNFVFGQSGAGNNWAKGHYTEGAELIDSVLDVVRKEAENCDCLQGFQVCHSLGGGTGSGMGTLLISKIREEYPDRMMLTFSVFPSPKVSDTVVEPYNATLSVHQLVENADECMVLDNEALYDICFRTLKLTTPSFGDLNHLISATMSGVTCCLRFPGQLNSDLRKLAVNLIPFPRLHFFMVGFAPLTSRGSQQYRALTVPELTQQMWDAKNMMCAADPRHGRYLTASAMFRGKMSTKEVDEQMINVQNKNSSYFVEWIPNNVKSSVCDIPPRGLSMASTFIGNSTSIQEMFRRVSEQFTAMFRRKAFLHWYTGEGMDEMEFTEAESNMNDLVSEYQQYQDATADEEEYEDEEEVQADDM</sequence>
<comment type="function">
    <text evidence="1">Tubulin is the major constituent of microtubules, a cylinder consisting of laterally associated linear protofilaments composed of alpha- and beta-tubulin heterodimers. Microtubules grow by the addition of GTP-tubulin dimers to the microtubule end, where a stabilizing cap forms. Below the cap, tubulin dimers are in GDP-bound state, owing to GTPase activity of alpha-tubulin.</text>
</comment>
<comment type="cofactor">
    <cofactor evidence="2">
        <name>Mg(2+)</name>
        <dbReference type="ChEBI" id="CHEBI:18420"/>
    </cofactor>
</comment>
<comment type="subunit">
    <text>Dimer of alpha and beta chains. A typical microtubule is a hollow water-filled tube with an outer diameter of 25 nm and an inner diameter of 15 nM. Alpha-beta heterodimers associate head-to-tail to form protofilaments running lengthwise along the microtubule wall with the beta-tubulin subunit facing the microtubule plus end conferring a structural polarity. Microtubules usually have 13 protofilaments but different protofilament numbers can be found in some organisms and specialized cells.</text>
</comment>
<comment type="subcellular location">
    <subcellularLocation>
        <location>Cytoplasm</location>
        <location>Cytoskeleton</location>
    </subcellularLocation>
</comment>
<comment type="similarity">
    <text evidence="5">Belongs to the tubulin family.</text>
</comment>
<feature type="chain" id="PRO_0000048360" description="Tubulin beta-6 chain">
    <location>
        <begin position="1"/>
        <end position="446"/>
    </location>
</feature>
<feature type="region of interest" description="Disordered" evidence="4">
    <location>
        <begin position="426"/>
        <end position="446"/>
    </location>
</feature>
<feature type="compositionally biased region" description="Acidic residues" evidence="4">
    <location>
        <begin position="429"/>
        <end position="446"/>
    </location>
</feature>
<feature type="binding site" evidence="3">
    <location>
        <position position="11"/>
    </location>
    <ligand>
        <name>GTP</name>
        <dbReference type="ChEBI" id="CHEBI:37565"/>
    </ligand>
</feature>
<feature type="binding site" evidence="2">
    <location>
        <position position="69"/>
    </location>
    <ligand>
        <name>GTP</name>
        <dbReference type="ChEBI" id="CHEBI:37565"/>
    </ligand>
</feature>
<feature type="binding site" evidence="2">
    <location>
        <position position="69"/>
    </location>
    <ligand>
        <name>Mg(2+)</name>
        <dbReference type="ChEBI" id="CHEBI:18420"/>
    </ligand>
</feature>
<feature type="binding site" evidence="3">
    <location>
        <position position="138"/>
    </location>
    <ligand>
        <name>GTP</name>
        <dbReference type="ChEBI" id="CHEBI:37565"/>
    </ligand>
</feature>
<feature type="binding site" evidence="3">
    <location>
        <position position="142"/>
    </location>
    <ligand>
        <name>GTP</name>
        <dbReference type="ChEBI" id="CHEBI:37565"/>
    </ligand>
</feature>
<feature type="binding site" evidence="3">
    <location>
        <position position="143"/>
    </location>
    <ligand>
        <name>GTP</name>
        <dbReference type="ChEBI" id="CHEBI:37565"/>
    </ligand>
</feature>
<feature type="binding site" evidence="3">
    <location>
        <position position="144"/>
    </location>
    <ligand>
        <name>GTP</name>
        <dbReference type="ChEBI" id="CHEBI:37565"/>
    </ligand>
</feature>
<feature type="binding site" evidence="3">
    <location>
        <position position="204"/>
    </location>
    <ligand>
        <name>GTP</name>
        <dbReference type="ChEBI" id="CHEBI:37565"/>
    </ligand>
</feature>
<feature type="binding site" evidence="3">
    <location>
        <position position="226"/>
    </location>
    <ligand>
        <name>GTP</name>
        <dbReference type="ChEBI" id="CHEBI:37565"/>
    </ligand>
</feature>
<organism>
    <name type="scientific">Zea mays</name>
    <name type="common">Maize</name>
    <dbReference type="NCBI Taxonomy" id="4577"/>
    <lineage>
        <taxon>Eukaryota</taxon>
        <taxon>Viridiplantae</taxon>
        <taxon>Streptophyta</taxon>
        <taxon>Embryophyta</taxon>
        <taxon>Tracheophyta</taxon>
        <taxon>Spermatophyta</taxon>
        <taxon>Magnoliopsida</taxon>
        <taxon>Liliopsida</taxon>
        <taxon>Poales</taxon>
        <taxon>Poaceae</taxon>
        <taxon>PACMAD clade</taxon>
        <taxon>Panicoideae</taxon>
        <taxon>Andropogonodae</taxon>
        <taxon>Andropogoneae</taxon>
        <taxon>Tripsacinae</taxon>
        <taxon>Zea</taxon>
    </lineage>
</organism>
<gene>
    <name type="primary">TUBB6</name>
    <name type="synonym">TUB6</name>
</gene>
<name>TBB6_MAIZE</name>
<evidence type="ECO:0000250" key="1">
    <source>
        <dbReference type="UniProtKB" id="P02557"/>
    </source>
</evidence>
<evidence type="ECO:0000250" key="2">
    <source>
        <dbReference type="UniProtKB" id="P68363"/>
    </source>
</evidence>
<evidence type="ECO:0000250" key="3">
    <source>
        <dbReference type="UniProtKB" id="Q13509"/>
    </source>
</evidence>
<evidence type="ECO:0000256" key="4">
    <source>
        <dbReference type="SAM" id="MobiDB-lite"/>
    </source>
</evidence>
<evidence type="ECO:0000305" key="5"/>
<protein>
    <recommendedName>
        <fullName>Tubulin beta-6 chain</fullName>
    </recommendedName>
    <alternativeName>
        <fullName>Beta-6-tubulin</fullName>
    </alternativeName>
</protein>
<accession>Q41783</accession>
<keyword id="KW-0963">Cytoplasm</keyword>
<keyword id="KW-0206">Cytoskeleton</keyword>
<keyword id="KW-0342">GTP-binding</keyword>
<keyword id="KW-0460">Magnesium</keyword>
<keyword id="KW-0479">Metal-binding</keyword>
<keyword id="KW-0493">Microtubule</keyword>
<keyword id="KW-0547">Nucleotide-binding</keyword>
<keyword id="KW-1185">Reference proteome</keyword>
<reference key="1">
    <citation type="journal article" date="1994" name="Plant Mol. Biol.">
        <title>Characterization of four new beta-tubulin genes and their expression during male flower development in maize (Zea mays L.).</title>
        <authorList>
            <person name="Villemur R."/>
            <person name="Haas N.A."/>
            <person name="Joyce C.M."/>
            <person name="Snustad D.P."/>
            <person name="Silflow C.D."/>
        </authorList>
    </citation>
    <scope>NUCLEOTIDE SEQUENCE [MRNA]</scope>
    <source>
        <strain>cv. Wisconsin 22</strain>
    </source>
</reference>
<dbReference type="EMBL" id="L10633">
    <property type="protein sequence ID" value="AAA20186.1"/>
    <property type="molecule type" value="mRNA"/>
</dbReference>
<dbReference type="PIR" id="S43327">
    <property type="entry name" value="S43327"/>
</dbReference>
<dbReference type="RefSeq" id="XP_008673429.1">
    <property type="nucleotide sequence ID" value="XM_008675207.1"/>
</dbReference>
<dbReference type="SMR" id="Q41783"/>
<dbReference type="FunCoup" id="Q41783">
    <property type="interactions" value="2368"/>
</dbReference>
<dbReference type="STRING" id="4577.Q41783"/>
<dbReference type="PaxDb" id="4577-GRMZM2G071790_P04"/>
<dbReference type="EnsemblPlants" id="Zm00001eb150420_T001">
    <property type="protein sequence ID" value="Zm00001eb150420_P001"/>
    <property type="gene ID" value="Zm00001eb150420"/>
</dbReference>
<dbReference type="EnsemblPlants" id="Zm00001eb150420_T002">
    <property type="protein sequence ID" value="Zm00001eb150420_P002"/>
    <property type="gene ID" value="Zm00001eb150420"/>
</dbReference>
<dbReference type="EnsemblPlants" id="Zm00001eb150420_T003">
    <property type="protein sequence ID" value="Zm00001eb150420_P003"/>
    <property type="gene ID" value="Zm00001eb150420"/>
</dbReference>
<dbReference type="GeneID" id="542239"/>
<dbReference type="Gramene" id="Zm00001eb150420_T001">
    <property type="protein sequence ID" value="Zm00001eb150420_P001"/>
    <property type="gene ID" value="Zm00001eb150420"/>
</dbReference>
<dbReference type="Gramene" id="Zm00001eb150420_T002">
    <property type="protein sequence ID" value="Zm00001eb150420_P002"/>
    <property type="gene ID" value="Zm00001eb150420"/>
</dbReference>
<dbReference type="Gramene" id="Zm00001eb150420_T003">
    <property type="protein sequence ID" value="Zm00001eb150420_P003"/>
    <property type="gene ID" value="Zm00001eb150420"/>
</dbReference>
<dbReference type="eggNOG" id="KOG1375">
    <property type="taxonomic scope" value="Eukaryota"/>
</dbReference>
<dbReference type="HOGENOM" id="CLU_015718_1_1_1"/>
<dbReference type="InParanoid" id="Q41783"/>
<dbReference type="OrthoDB" id="608722at2759"/>
<dbReference type="Proteomes" id="UP000007305">
    <property type="component" value="Chromosome 3"/>
</dbReference>
<dbReference type="ExpressionAtlas" id="Q41783">
    <property type="expression patterns" value="baseline and differential"/>
</dbReference>
<dbReference type="GO" id="GO:0005737">
    <property type="term" value="C:cytoplasm"/>
    <property type="evidence" value="ECO:0000318"/>
    <property type="project" value="GO_Central"/>
</dbReference>
<dbReference type="GO" id="GO:0005874">
    <property type="term" value="C:microtubule"/>
    <property type="evidence" value="ECO:0000318"/>
    <property type="project" value="GO_Central"/>
</dbReference>
<dbReference type="GO" id="GO:0005525">
    <property type="term" value="F:GTP binding"/>
    <property type="evidence" value="ECO:0000318"/>
    <property type="project" value="GO_Central"/>
</dbReference>
<dbReference type="GO" id="GO:0003924">
    <property type="term" value="F:GTPase activity"/>
    <property type="evidence" value="ECO:0007669"/>
    <property type="project" value="InterPro"/>
</dbReference>
<dbReference type="GO" id="GO:0046872">
    <property type="term" value="F:metal ion binding"/>
    <property type="evidence" value="ECO:0007669"/>
    <property type="project" value="UniProtKB-KW"/>
</dbReference>
<dbReference type="GO" id="GO:0005200">
    <property type="term" value="F:structural constituent of cytoskeleton"/>
    <property type="evidence" value="ECO:0000318"/>
    <property type="project" value="GO_Central"/>
</dbReference>
<dbReference type="GO" id="GO:0000226">
    <property type="term" value="P:microtubule cytoskeleton organization"/>
    <property type="evidence" value="ECO:0000318"/>
    <property type="project" value="GO_Central"/>
</dbReference>
<dbReference type="GO" id="GO:0000278">
    <property type="term" value="P:mitotic cell cycle"/>
    <property type="evidence" value="ECO:0000318"/>
    <property type="project" value="GO_Central"/>
</dbReference>
<dbReference type="CDD" id="cd02187">
    <property type="entry name" value="beta_tubulin"/>
    <property type="match status" value="1"/>
</dbReference>
<dbReference type="FunFam" id="1.10.287.600:FF:000002">
    <property type="entry name" value="Tubulin beta chain"/>
    <property type="match status" value="1"/>
</dbReference>
<dbReference type="FunFam" id="3.30.1330.20:FF:000002">
    <property type="entry name" value="Tubulin beta chain"/>
    <property type="match status" value="1"/>
</dbReference>
<dbReference type="FunFam" id="3.40.50.1440:FF:000005">
    <property type="entry name" value="Tubulin beta chain"/>
    <property type="match status" value="1"/>
</dbReference>
<dbReference type="Gene3D" id="1.10.287.600">
    <property type="entry name" value="Helix hairpin bin"/>
    <property type="match status" value="1"/>
</dbReference>
<dbReference type="Gene3D" id="3.30.1330.20">
    <property type="entry name" value="Tubulin/FtsZ, C-terminal domain"/>
    <property type="match status" value="1"/>
</dbReference>
<dbReference type="Gene3D" id="3.40.50.1440">
    <property type="entry name" value="Tubulin/FtsZ, GTPase domain"/>
    <property type="match status" value="1"/>
</dbReference>
<dbReference type="InterPro" id="IPR013838">
    <property type="entry name" value="Beta-tubulin_BS"/>
</dbReference>
<dbReference type="InterPro" id="IPR002453">
    <property type="entry name" value="Beta_tubulin"/>
</dbReference>
<dbReference type="InterPro" id="IPR008280">
    <property type="entry name" value="Tub_FtsZ_C"/>
</dbReference>
<dbReference type="InterPro" id="IPR000217">
    <property type="entry name" value="Tubulin"/>
</dbReference>
<dbReference type="InterPro" id="IPR037103">
    <property type="entry name" value="Tubulin/FtsZ-like_C"/>
</dbReference>
<dbReference type="InterPro" id="IPR018316">
    <property type="entry name" value="Tubulin/FtsZ_2-layer-sand-dom"/>
</dbReference>
<dbReference type="InterPro" id="IPR036525">
    <property type="entry name" value="Tubulin/FtsZ_GTPase_sf"/>
</dbReference>
<dbReference type="InterPro" id="IPR023123">
    <property type="entry name" value="Tubulin_C"/>
</dbReference>
<dbReference type="InterPro" id="IPR017975">
    <property type="entry name" value="Tubulin_CS"/>
</dbReference>
<dbReference type="InterPro" id="IPR003008">
    <property type="entry name" value="Tubulin_FtsZ_GTPase"/>
</dbReference>
<dbReference type="PANTHER" id="PTHR11588">
    <property type="entry name" value="TUBULIN"/>
    <property type="match status" value="1"/>
</dbReference>
<dbReference type="Pfam" id="PF00091">
    <property type="entry name" value="Tubulin"/>
    <property type="match status" value="1"/>
</dbReference>
<dbReference type="Pfam" id="PF03953">
    <property type="entry name" value="Tubulin_C"/>
    <property type="match status" value="1"/>
</dbReference>
<dbReference type="PRINTS" id="PR01163">
    <property type="entry name" value="BETATUBULIN"/>
</dbReference>
<dbReference type="PRINTS" id="PR01161">
    <property type="entry name" value="TUBULIN"/>
</dbReference>
<dbReference type="SMART" id="SM00864">
    <property type="entry name" value="Tubulin"/>
    <property type="match status" value="1"/>
</dbReference>
<dbReference type="SMART" id="SM00865">
    <property type="entry name" value="Tubulin_C"/>
    <property type="match status" value="1"/>
</dbReference>
<dbReference type="SUPFAM" id="SSF55307">
    <property type="entry name" value="Tubulin C-terminal domain-like"/>
    <property type="match status" value="1"/>
</dbReference>
<dbReference type="SUPFAM" id="SSF52490">
    <property type="entry name" value="Tubulin nucleotide-binding domain-like"/>
    <property type="match status" value="1"/>
</dbReference>
<dbReference type="PROSITE" id="PS00227">
    <property type="entry name" value="TUBULIN"/>
    <property type="match status" value="1"/>
</dbReference>
<dbReference type="PROSITE" id="PS00228">
    <property type="entry name" value="TUBULIN_B_AUTOREG"/>
    <property type="match status" value="1"/>
</dbReference>